<protein>
    <recommendedName>
        <fullName>Serine/arginine-rich splicing factor 10</fullName>
    </recommendedName>
    <alternativeName>
        <fullName>40 kDa SR-repressor protein</fullName>
        <shortName>SRrp40</shortName>
    </alternativeName>
    <alternativeName>
        <fullName>FUS-interacting serine-arginine-rich protein 1</fullName>
    </alternativeName>
    <alternativeName>
        <fullName>Splicing factor SRp38</fullName>
    </alternativeName>
    <alternativeName>
        <fullName>Splicing factor, arginine/serine-rich 13A</fullName>
    </alternativeName>
    <alternativeName>
        <fullName>TLS-associated protein with Ser-Arg repeats</fullName>
        <shortName>TASR</shortName>
        <shortName>TLS-associated protein with SR repeats</shortName>
    </alternativeName>
    <alternativeName>
        <fullName>TLS-associated serine-arginine protein</fullName>
        <shortName>TLS-associated SR protein</shortName>
    </alternativeName>
</protein>
<sequence length="262" mass="31301">MSRYLRPPNTSLFVRNVADDTRSEDLRREFGRYGPIVDVYVPLDFYTRRPRGFAYVQFEDVRDAEDALHNLDRKWICGRQIEIQFAQGDRKTPNQMKAKEGRNVYSSSRYDDYDRYRRSRSRSYERRRSRSRSFDYNYRRSYSPRNSRPTGRPRRSRSHSDNDRFKHRNRSFSRSKSNSRSRSKSQPKKEMKAKSRSRSASHTKTRGTSKTDSKTHYKSGSRYEKESRKKEPPRSKSQSRSQSRSRSKSRSRSWTSPKSSGH</sequence>
<keyword id="KW-0025">Alternative splicing</keyword>
<keyword id="KW-0963">Cytoplasm</keyword>
<keyword id="KW-0507">mRNA processing</keyword>
<keyword id="KW-0508">mRNA splicing</keyword>
<keyword id="KW-0539">Nucleus</keyword>
<keyword id="KW-0597">Phosphoprotein</keyword>
<keyword id="KW-1267">Proteomics identification</keyword>
<keyword id="KW-1185">Reference proteome</keyword>
<keyword id="KW-0694">RNA-binding</keyword>
<comment type="function">
    <text evidence="4 6 7 8">Splicing factor that in its dephosphorylated form acts as a general repressor of pre-mRNA splicing (PubMed:11684676, PubMed:12419250, PubMed:14765198). Seems to interfere with the U1 snRNP 5'-splice recognition of SNRNP70 (PubMed:14765198). Required for splicing repression in M-phase cells and after heat shock (PubMed:14765198). Also acts as a splicing factor that specifically promotes exon skipping during alternative splicing (PubMed:26876937). Interaction with YTHDC1, a RNA-binding protein that recognizes and binds N6-methyladenosine (m6A)-containing RNAs, prevents SRSF10 from binding to its mRNA-binding sites close to m6A-containing regions, leading to inhibit exon skipping during alternative splicing (PubMed:26876937). May be involved in regulation of alternative splicing in neurons, with isoform 1 acting as a positive and isoform 3 as a negative regulator (PubMed:12419250).</text>
</comment>
<comment type="subunit">
    <text evidence="7 8 9">The phosphorylated but not the dephosphorylated form interacts with TRA2B/SFRS10 (PubMed:14765198). The dephosphorylated form interacts with SNRNP70 (PubMed:14765198). Isoform 1 interacts with FUS C-terminus (PubMed:9774382). Isoform 3 interacts with FUS C-terminus (PubMed:9774382). Interacts with YTHDC1, leading to inhibit RNA-binding activity of SRSF10 (PubMed:26876937).</text>
</comment>
<comment type="interaction">
    <interactant intactId="EBI-353655">
        <id>O75494</id>
    </interactant>
    <interactant intactId="EBI-11981867">
        <id>P49759-3</id>
        <label>CLK1</label>
    </interactant>
    <organismsDiffer>false</organismsDiffer>
    <experiments>3</experiments>
</comment>
<comment type="interaction">
    <interactant intactId="EBI-353655">
        <id>O75494</id>
    </interactant>
    <interactant intactId="EBI-745579">
        <id>P49761</id>
        <label>CLK3</label>
    </interactant>
    <organismsDiffer>false</organismsDiffer>
    <experiments>5</experiments>
</comment>
<comment type="interaction">
    <interactant intactId="EBI-353655">
        <id>O75494</id>
    </interactant>
    <interactant intactId="EBI-395959">
        <id>Q15287</id>
        <label>RNPS1</label>
    </interactant>
    <organismsDiffer>false</organismsDiffer>
    <experiments>4</experiments>
</comment>
<comment type="interaction">
    <interactant intactId="EBI-353655">
        <id>O75494</id>
    </interactant>
    <interactant intactId="EBI-476295">
        <id>P31947</id>
        <label>SFN</label>
    </interactant>
    <organismsDiffer>false</organismsDiffer>
    <experiments>3</experiments>
</comment>
<comment type="interaction">
    <interactant intactId="EBI-353655">
        <id>O75494</id>
    </interactant>
    <interactant intactId="EBI-593303">
        <id>P78362</id>
        <label>SRPK2</label>
    </interactant>
    <organismsDiffer>false</organismsDiffer>
    <experiments>3</experiments>
</comment>
<comment type="interaction">
    <interactant intactId="EBI-353655">
        <id>O75494</id>
    </interactant>
    <interactant intactId="EBI-398920">
        <id>Q07955</id>
        <label>SRSF1</label>
    </interactant>
    <organismsDiffer>false</organismsDiffer>
    <experiments>3</experiments>
</comment>
<comment type="interaction">
    <interactant intactId="EBI-353655">
        <id>O75494</id>
    </interactant>
    <interactant intactId="EBI-356498">
        <id>P62258</id>
        <label>YWHAE</label>
    </interactant>
    <organismsDiffer>false</organismsDiffer>
    <experiments>3</experiments>
</comment>
<comment type="interaction">
    <interactant intactId="EBI-353655">
        <id>O75494</id>
    </interactant>
    <interactant intactId="EBI-359832">
        <id>P61981</id>
        <label>YWHAG</label>
    </interactant>
    <organismsDiffer>false</organismsDiffer>
    <experiments>5</experiments>
</comment>
<comment type="subcellular location">
    <subcellularLocation>
        <location evidence="4 8">Nucleus speckle</location>
    </subcellularLocation>
    <subcellularLocation>
        <location evidence="4">Cytoplasm</location>
    </subcellularLocation>
</comment>
<comment type="alternative products">
    <event type="alternative splicing"/>
    <isoform>
        <id>O75494-1</id>
        <name>1</name>
        <name>TASR-1</name>
        <sequence type="displayed"/>
    </isoform>
    <isoform>
        <id>O75494-2</id>
        <name>2</name>
        <sequence type="described" ref="VSP_010421"/>
    </isoform>
    <isoform>
        <id>O75494-3</id>
        <name>3</name>
        <name>TASR-2</name>
        <name>SRp38-2</name>
        <sequence type="described" ref="VSP_010424 VSP_010425"/>
    </isoform>
    <isoform>
        <id>O75494-4</id>
        <name>4</name>
        <sequence type="described" ref="VSP_010422 VSP_010423 VSP_010425"/>
    </isoform>
    <isoform>
        <id>O75494-5</id>
        <name>5</name>
        <sequence type="described" ref="VSP_043697 VSP_043698 VSP_010423 VSP_010425"/>
    </isoform>
    <isoform>
        <id>O75494-6</id>
        <name>6</name>
        <sequence type="described" ref="VSP_010421 VSP_010424 VSP_010425"/>
    </isoform>
</comment>
<comment type="tissue specificity">
    <text evidence="4 5">Widely expressed.</text>
</comment>
<comment type="PTM">
    <text evidence="6 7">Phosphorylated. Fully dephosphorylated in mitosis and partially dephosphorylated on heat shock.</text>
</comment>
<comment type="similarity">
    <text evidence="14">Belongs to the splicing factor SR family.</text>
</comment>
<gene>
    <name type="primary">SRSF10</name>
    <name type="synonym">FUSIP1</name>
    <name type="synonym">FUSIP2</name>
    <name type="synonym">SFRS13A</name>
    <name type="synonym">TASR</name>
</gene>
<dbReference type="EMBL" id="AF047448">
    <property type="protein sequence ID" value="AAC70918.1"/>
    <property type="molecule type" value="mRNA"/>
</dbReference>
<dbReference type="EMBL" id="AF067730">
    <property type="protein sequence ID" value="AAC26727.1"/>
    <property type="molecule type" value="mRNA"/>
</dbReference>
<dbReference type="EMBL" id="AF449427">
    <property type="protein sequence ID" value="AAL57514.1"/>
    <property type="molecule type" value="mRNA"/>
</dbReference>
<dbReference type="EMBL" id="AY150180">
    <property type="protein sequence ID" value="AAN65380.1"/>
    <property type="molecule type" value="mRNA"/>
</dbReference>
<dbReference type="EMBL" id="AY150181">
    <property type="protein sequence ID" value="AAN65381.1"/>
    <property type="molecule type" value="mRNA"/>
</dbReference>
<dbReference type="EMBL" id="AF419331">
    <property type="protein sequence ID" value="AAL16665.1"/>
    <property type="molecule type" value="mRNA"/>
</dbReference>
<dbReference type="EMBL" id="AF419332">
    <property type="protein sequence ID" value="AAL16666.1"/>
    <property type="molecule type" value="Genomic_DNA"/>
</dbReference>
<dbReference type="EMBL" id="AY048592">
    <property type="protein sequence ID" value="AAL06098.1"/>
    <property type="molecule type" value="Genomic_DNA"/>
</dbReference>
<dbReference type="EMBL" id="AY048592">
    <property type="protein sequence ID" value="AAL06099.1"/>
    <property type="molecule type" value="Genomic_DNA"/>
</dbReference>
<dbReference type="EMBL" id="AK001286">
    <property type="protein sequence ID" value="BAA91601.1"/>
    <property type="molecule type" value="mRNA"/>
</dbReference>
<dbReference type="EMBL" id="AK001656">
    <property type="protein sequence ID" value="BAG50956.1"/>
    <property type="molecule type" value="mRNA"/>
</dbReference>
<dbReference type="EMBL" id="AK296175">
    <property type="protein sequence ID" value="BAG58911.1"/>
    <property type="molecule type" value="mRNA"/>
</dbReference>
<dbReference type="EMBL" id="AL590609">
    <property type="status" value="NOT_ANNOTATED_CDS"/>
    <property type="molecule type" value="Genomic_DNA"/>
</dbReference>
<dbReference type="EMBL" id="BC001107">
    <property type="protein sequence ID" value="AAH01107.1"/>
    <property type="molecule type" value="mRNA"/>
</dbReference>
<dbReference type="EMBL" id="BC005039">
    <property type="protein sequence ID" value="AAH05039.1"/>
    <property type="molecule type" value="mRNA"/>
</dbReference>
<dbReference type="EMBL" id="BC010074">
    <property type="protein sequence ID" value="AAH10074.1"/>
    <property type="molecule type" value="mRNA"/>
</dbReference>
<dbReference type="CCDS" id="CCDS30629.1">
    <molecule id="O75494-3"/>
</dbReference>
<dbReference type="CCDS" id="CCDS30630.1">
    <molecule id="O75494-1"/>
</dbReference>
<dbReference type="CCDS" id="CCDS53280.1">
    <molecule id="O75494-5"/>
</dbReference>
<dbReference type="CCDS" id="CCDS53281.1">
    <molecule id="O75494-6"/>
</dbReference>
<dbReference type="CCDS" id="CCDS53282.1">
    <molecule id="O75494-2"/>
</dbReference>
<dbReference type="CCDS" id="CCDS53283.1">
    <molecule id="O75494-4"/>
</dbReference>
<dbReference type="RefSeq" id="NP_001177934.1">
    <molecule id="O75494-2"/>
    <property type="nucleotide sequence ID" value="NM_001191005.3"/>
</dbReference>
<dbReference type="RefSeq" id="NP_001177935.1">
    <molecule id="O75494-4"/>
    <property type="nucleotide sequence ID" value="NM_001191006.3"/>
</dbReference>
<dbReference type="RefSeq" id="NP_001177936.1">
    <molecule id="O75494-6"/>
    <property type="nucleotide sequence ID" value="NM_001191007.3"/>
</dbReference>
<dbReference type="RefSeq" id="NP_001177938.1">
    <molecule id="O75494-5"/>
    <property type="nucleotide sequence ID" value="NM_001191009.3"/>
</dbReference>
<dbReference type="RefSeq" id="NP_006616.1">
    <molecule id="O75494-3"/>
    <property type="nucleotide sequence ID" value="NM_006625.6"/>
</dbReference>
<dbReference type="RefSeq" id="NP_473357.1">
    <molecule id="O75494-1"/>
    <property type="nucleotide sequence ID" value="NM_054016.4"/>
</dbReference>
<dbReference type="SMR" id="O75494"/>
<dbReference type="BioGRID" id="115990">
    <property type="interactions" value="299"/>
</dbReference>
<dbReference type="FunCoup" id="O75494">
    <property type="interactions" value="4019"/>
</dbReference>
<dbReference type="IntAct" id="O75494">
    <property type="interactions" value="117"/>
</dbReference>
<dbReference type="MINT" id="O75494"/>
<dbReference type="STRING" id="9606.ENSP00000420195"/>
<dbReference type="GlyGen" id="O75494">
    <property type="glycosylation" value="3 sites, 1 N-linked glycan (1 site), 1 O-linked glycan (2 sites)"/>
</dbReference>
<dbReference type="iPTMnet" id="O75494"/>
<dbReference type="PhosphoSitePlus" id="O75494"/>
<dbReference type="SwissPalm" id="O75494"/>
<dbReference type="BioMuta" id="SRSF10"/>
<dbReference type="jPOST" id="O75494"/>
<dbReference type="MassIVE" id="O75494"/>
<dbReference type="PaxDb" id="9606-ENSP00000420195"/>
<dbReference type="PeptideAtlas" id="O75494"/>
<dbReference type="ProteomicsDB" id="50048">
    <molecule id="O75494-1"/>
</dbReference>
<dbReference type="ProteomicsDB" id="50049">
    <molecule id="O75494-2"/>
</dbReference>
<dbReference type="ProteomicsDB" id="50050">
    <molecule id="O75494-3"/>
</dbReference>
<dbReference type="ProteomicsDB" id="50051">
    <molecule id="O75494-4"/>
</dbReference>
<dbReference type="ProteomicsDB" id="50052">
    <molecule id="O75494-5"/>
</dbReference>
<dbReference type="ProteomicsDB" id="63091"/>
<dbReference type="Pumba" id="O75494"/>
<dbReference type="TopDownProteomics" id="O75494-1">
    <molecule id="O75494-1"/>
</dbReference>
<dbReference type="TopDownProteomics" id="O75494-2">
    <molecule id="O75494-2"/>
</dbReference>
<dbReference type="TopDownProteomics" id="O75494-3">
    <molecule id="O75494-3"/>
</dbReference>
<dbReference type="TopDownProteomics" id="O75494-4">
    <molecule id="O75494-4"/>
</dbReference>
<dbReference type="TopDownProteomics" id="O75494-5">
    <molecule id="O75494-5"/>
</dbReference>
<dbReference type="Antibodypedia" id="60384">
    <property type="antibodies" value="272 antibodies from 26 providers"/>
</dbReference>
<dbReference type="DNASU" id="10772"/>
<dbReference type="Ensembl" id="ENST00000343255.9">
    <molecule id="O75494-2"/>
    <property type="protein sequence ID" value="ENSP00000344149.4"/>
    <property type="gene ID" value="ENSG00000188529.15"/>
</dbReference>
<dbReference type="Ensembl" id="ENST00000344989.10">
    <molecule id="O75494-3"/>
    <property type="protein sequence ID" value="ENSP00000342913.5"/>
    <property type="gene ID" value="ENSG00000188529.15"/>
</dbReference>
<dbReference type="Ensembl" id="ENST00000374452.9">
    <molecule id="O75494-4"/>
    <property type="protein sequence ID" value="ENSP00000363576.5"/>
    <property type="gene ID" value="ENSG00000188529.15"/>
</dbReference>
<dbReference type="Ensembl" id="ENST00000453840.7">
    <molecule id="O75494-6"/>
    <property type="protein sequence ID" value="ENSP00000388991.3"/>
    <property type="gene ID" value="ENSG00000188529.15"/>
</dbReference>
<dbReference type="Ensembl" id="ENST00000484146.6">
    <molecule id="O75494-5"/>
    <property type="protein sequence ID" value="ENSP00000419813.2"/>
    <property type="gene ID" value="ENSG00000188529.15"/>
</dbReference>
<dbReference type="Ensembl" id="ENST00000492112.3">
    <molecule id="O75494-1"/>
    <property type="protein sequence ID" value="ENSP00000420195.1"/>
    <property type="gene ID" value="ENSG00000188529.15"/>
</dbReference>
<dbReference type="GeneID" id="10772"/>
<dbReference type="KEGG" id="hsa:10772"/>
<dbReference type="MANE-Select" id="ENST00000492112.3">
    <property type="protein sequence ID" value="ENSP00000420195.1"/>
    <property type="RefSeq nucleotide sequence ID" value="NM_054016.4"/>
    <property type="RefSeq protein sequence ID" value="NP_473357.1"/>
</dbReference>
<dbReference type="UCSC" id="uc057dhz.1">
    <molecule id="O75494-1"/>
    <property type="organism name" value="human"/>
</dbReference>
<dbReference type="AGR" id="HGNC:16713"/>
<dbReference type="CTD" id="10772"/>
<dbReference type="DisGeNET" id="10772"/>
<dbReference type="GeneCards" id="SRSF10"/>
<dbReference type="HGNC" id="HGNC:16713">
    <property type="gene designation" value="SRSF10"/>
</dbReference>
<dbReference type="HPA" id="ENSG00000188529">
    <property type="expression patterns" value="Low tissue specificity"/>
</dbReference>
<dbReference type="MIM" id="605221">
    <property type="type" value="gene"/>
</dbReference>
<dbReference type="neXtProt" id="NX_O75494"/>
<dbReference type="OpenTargets" id="ENSG00000188529"/>
<dbReference type="PharmGKB" id="PA28427"/>
<dbReference type="VEuPathDB" id="HostDB:ENSG00000188529"/>
<dbReference type="eggNOG" id="KOG0118">
    <property type="taxonomic scope" value="Eukaryota"/>
</dbReference>
<dbReference type="GeneTree" id="ENSGT00940000154450"/>
<dbReference type="HOGENOM" id="CLU_012062_10_2_1"/>
<dbReference type="InParanoid" id="O75494"/>
<dbReference type="OMA" id="YMHQRNQ"/>
<dbReference type="OrthoDB" id="439808at2759"/>
<dbReference type="PAN-GO" id="O75494">
    <property type="GO annotations" value="4 GO annotations based on evolutionary models"/>
</dbReference>
<dbReference type="PhylomeDB" id="O75494"/>
<dbReference type="TreeFam" id="TF351864"/>
<dbReference type="PathwayCommons" id="O75494"/>
<dbReference type="Reactome" id="R-HSA-72163">
    <property type="pathway name" value="mRNA Splicing - Major Pathway"/>
</dbReference>
<dbReference type="Reactome" id="R-HSA-72203">
    <property type="pathway name" value="Processing of Capped Intron-Containing Pre-mRNA"/>
</dbReference>
<dbReference type="SignaLink" id="O75494"/>
<dbReference type="BioGRID-ORCS" id="10772">
    <property type="hits" value="599 hits in 1141 CRISPR screens"/>
</dbReference>
<dbReference type="CD-CODE" id="1A18FFC4">
    <property type="entry name" value="Paraspeckle"/>
</dbReference>
<dbReference type="CD-CODE" id="804901D1">
    <property type="entry name" value="Nuclear speckle"/>
</dbReference>
<dbReference type="ChiTaRS" id="SRSF10">
    <property type="organism name" value="human"/>
</dbReference>
<dbReference type="GeneWiki" id="FUSIP1"/>
<dbReference type="GenomeRNAi" id="10772"/>
<dbReference type="Pharos" id="O75494">
    <property type="development level" value="Tbio"/>
</dbReference>
<dbReference type="PRO" id="PR:O75494"/>
<dbReference type="Proteomes" id="UP000005640">
    <property type="component" value="Chromosome 1"/>
</dbReference>
<dbReference type="RNAct" id="O75494">
    <property type="molecule type" value="protein"/>
</dbReference>
<dbReference type="Bgee" id="ENSG00000188529">
    <property type="expression patterns" value="Expressed in ventricular zone and 204 other cell types or tissues"/>
</dbReference>
<dbReference type="ExpressionAtlas" id="O75494">
    <property type="expression patterns" value="baseline and differential"/>
</dbReference>
<dbReference type="GO" id="GO:0043679">
    <property type="term" value="C:axon terminus"/>
    <property type="evidence" value="ECO:0007669"/>
    <property type="project" value="Ensembl"/>
</dbReference>
<dbReference type="GO" id="GO:0005737">
    <property type="term" value="C:cytoplasm"/>
    <property type="evidence" value="ECO:0000303"/>
    <property type="project" value="UniProtKB"/>
</dbReference>
<dbReference type="GO" id="GO:0005829">
    <property type="term" value="C:cytosol"/>
    <property type="evidence" value="ECO:0007669"/>
    <property type="project" value="GOC"/>
</dbReference>
<dbReference type="GO" id="GO:0030425">
    <property type="term" value="C:dendrite"/>
    <property type="evidence" value="ECO:0007669"/>
    <property type="project" value="Ensembl"/>
</dbReference>
<dbReference type="GO" id="GO:0043025">
    <property type="term" value="C:neuronal cell body"/>
    <property type="evidence" value="ECO:0007669"/>
    <property type="project" value="Ensembl"/>
</dbReference>
<dbReference type="GO" id="GO:0016607">
    <property type="term" value="C:nuclear speck"/>
    <property type="evidence" value="ECO:0000314"/>
    <property type="project" value="UniProtKB"/>
</dbReference>
<dbReference type="GO" id="GO:0005654">
    <property type="term" value="C:nucleoplasm"/>
    <property type="evidence" value="ECO:0000314"/>
    <property type="project" value="HPA"/>
</dbReference>
<dbReference type="GO" id="GO:0005634">
    <property type="term" value="C:nucleus"/>
    <property type="evidence" value="ECO:0000305"/>
    <property type="project" value="UniProtKB"/>
</dbReference>
<dbReference type="GO" id="GO:0003723">
    <property type="term" value="F:RNA binding"/>
    <property type="evidence" value="ECO:0000314"/>
    <property type="project" value="UniProtKB"/>
</dbReference>
<dbReference type="GO" id="GO:0050733">
    <property type="term" value="F:RS domain binding"/>
    <property type="evidence" value="ECO:0000303"/>
    <property type="project" value="UniProtKB"/>
</dbReference>
<dbReference type="GO" id="GO:0051082">
    <property type="term" value="F:unfolded protein binding"/>
    <property type="evidence" value="ECO:0000303"/>
    <property type="project" value="UniProtKB"/>
</dbReference>
<dbReference type="GO" id="GO:0016482">
    <property type="term" value="P:cytosolic transport"/>
    <property type="evidence" value="ECO:0007669"/>
    <property type="project" value="Ensembl"/>
</dbReference>
<dbReference type="GO" id="GO:0006376">
    <property type="term" value="P:mRNA splice site recognition"/>
    <property type="evidence" value="ECO:0000314"/>
    <property type="project" value="UniProtKB"/>
</dbReference>
<dbReference type="GO" id="GO:0000398">
    <property type="term" value="P:mRNA splicing, via spliceosome"/>
    <property type="evidence" value="ECO:0000314"/>
    <property type="project" value="UniProtKB"/>
</dbReference>
<dbReference type="GO" id="GO:0048025">
    <property type="term" value="P:negative regulation of mRNA splicing, via spliceosome"/>
    <property type="evidence" value="ECO:0000314"/>
    <property type="project" value="UniProtKB"/>
</dbReference>
<dbReference type="GO" id="GO:0006355">
    <property type="term" value="P:regulation of DNA-templated transcription"/>
    <property type="evidence" value="ECO:0000303"/>
    <property type="project" value="UniProtKB"/>
</dbReference>
<dbReference type="GO" id="GO:0048024">
    <property type="term" value="P:regulation of mRNA splicing, via spliceosome"/>
    <property type="evidence" value="ECO:0000314"/>
    <property type="project" value="UniProtKB"/>
</dbReference>
<dbReference type="GO" id="GO:0000375">
    <property type="term" value="P:RNA splicing, via transesterification reactions"/>
    <property type="evidence" value="ECO:0000314"/>
    <property type="project" value="UniProtKB"/>
</dbReference>
<dbReference type="GO" id="GO:0000244">
    <property type="term" value="P:spliceosomal tri-snRNP complex assembly"/>
    <property type="evidence" value="ECO:0000303"/>
    <property type="project" value="UniProtKB"/>
</dbReference>
<dbReference type="FunFam" id="3.30.70.330:FF:000155">
    <property type="entry name" value="serine/arginine-rich splicing factor 10 isoform X1"/>
    <property type="match status" value="1"/>
</dbReference>
<dbReference type="Gene3D" id="3.30.70.330">
    <property type="match status" value="1"/>
</dbReference>
<dbReference type="InterPro" id="IPR012677">
    <property type="entry name" value="Nucleotide-bd_a/b_plait_sf"/>
</dbReference>
<dbReference type="InterPro" id="IPR035979">
    <property type="entry name" value="RBD_domain_sf"/>
</dbReference>
<dbReference type="InterPro" id="IPR050441">
    <property type="entry name" value="RBM"/>
</dbReference>
<dbReference type="InterPro" id="IPR000504">
    <property type="entry name" value="RRM_dom"/>
</dbReference>
<dbReference type="PANTHER" id="PTHR48034">
    <property type="entry name" value="TRANSFORMER-2 SEX-DETERMINING PROTEIN-RELATED"/>
    <property type="match status" value="1"/>
</dbReference>
<dbReference type="Pfam" id="PF00076">
    <property type="entry name" value="RRM_1"/>
    <property type="match status" value="1"/>
</dbReference>
<dbReference type="SMART" id="SM00360">
    <property type="entry name" value="RRM"/>
    <property type="match status" value="1"/>
</dbReference>
<dbReference type="SUPFAM" id="SSF54928">
    <property type="entry name" value="RNA-binding domain, RBD"/>
    <property type="match status" value="1"/>
</dbReference>
<dbReference type="PROSITE" id="PS50102">
    <property type="entry name" value="RRM"/>
    <property type="match status" value="1"/>
</dbReference>
<reference key="1">
    <citation type="journal article" date="1998" name="J. Biol. Chem.">
        <title>Oncoprotein TLS interacts with serine-arginine proteins involved in RNA splicing.</title>
        <authorList>
            <person name="Yang L."/>
            <person name="Embree L.J."/>
            <person name="Tsai S."/>
            <person name="Hickstein D.D."/>
        </authorList>
    </citation>
    <scope>NUCLEOTIDE SEQUENCE [MRNA] (ISOFORM 3)</scope>
    <scope>INTERACTION WITH FUS</scope>
    <source>
        <tissue>Leukemia</tissue>
    </source>
</reference>
<reference key="2">
    <citation type="journal article" date="2000" name="Mol. Cell. Biol.">
        <title>TLS-ERG leukemia fusion protein inhibits RNA splicing mediated by serine-arginine proteins.</title>
        <authorList>
            <person name="Yang L."/>
            <person name="Embree L.J."/>
            <person name="Hickstein D.D."/>
        </authorList>
    </citation>
    <scope>NUCLEOTIDE SEQUENCE [MRNA] (ISOFORM 1)</scope>
</reference>
<reference key="3">
    <citation type="journal article" date="2001" name="J. Biol. Chem.">
        <title>Serine-arginine (SR) protein-like factors that antagonize authentic SR proteins and regulate alternative splicing.</title>
        <authorList>
            <person name="Cowper A.E."/>
            <person name="Caceres J.F."/>
            <person name="Mayeda A."/>
            <person name="Screaton G.R."/>
        </authorList>
    </citation>
    <scope>NUCLEOTIDE SEQUENCE [MRNA] (ISOFORM 1)</scope>
    <scope>FUNCTION</scope>
    <scope>SUBCELLULAR LOCATION</scope>
    <scope>TISSUE SPECIFICITY</scope>
</reference>
<reference key="4">
    <citation type="journal article" date="2002" name="Cell">
        <title>The SR protein SRp38 represses splicing in M Phase cells.</title>
        <authorList>
            <person name="Shin C."/>
            <person name="Manley J.L."/>
        </authorList>
    </citation>
    <scope>NUCLEOTIDE SEQUENCE [MRNA] (ISOFORMS 1 AND 3)</scope>
    <scope>FUNCTION</scope>
    <scope>PHOSPHORYLATION</scope>
</reference>
<reference key="5">
    <citation type="journal article" date="2002" name="Gene">
        <title>Characterization and expression of the human gene encoding two translocation liposarcoma protein-associated serine-arginine (TASR) proteins.</title>
        <authorList>
            <person name="Clinton J.M."/>
            <person name="Chansky H.A."/>
            <person name="Odell D.D."/>
            <person name="Zielinska-Kwiatkowska A."/>
            <person name="Hickstein D.D."/>
            <person name="Yang L."/>
        </authorList>
    </citation>
    <scope>NUCLEOTIDE SEQUENCE [GENOMIC DNA / MRNA]</scope>
    <scope>ALTERNATIVE SPLICING (ISOFORMS 2 AND 3)</scope>
    <scope>TISSUE SPECIFICITY</scope>
</reference>
<reference key="6">
    <citation type="journal article" date="2004" name="Nat. Genet.">
        <title>Complete sequencing and characterization of 21,243 full-length human cDNAs.</title>
        <authorList>
            <person name="Ota T."/>
            <person name="Suzuki Y."/>
            <person name="Nishikawa T."/>
            <person name="Otsuki T."/>
            <person name="Sugiyama T."/>
            <person name="Irie R."/>
            <person name="Wakamatsu A."/>
            <person name="Hayashi K."/>
            <person name="Sato H."/>
            <person name="Nagai K."/>
            <person name="Kimura K."/>
            <person name="Makita H."/>
            <person name="Sekine M."/>
            <person name="Obayashi M."/>
            <person name="Nishi T."/>
            <person name="Shibahara T."/>
            <person name="Tanaka T."/>
            <person name="Ishii S."/>
            <person name="Yamamoto J."/>
            <person name="Saito K."/>
            <person name="Kawai Y."/>
            <person name="Isono Y."/>
            <person name="Nakamura Y."/>
            <person name="Nagahari K."/>
            <person name="Murakami K."/>
            <person name="Yasuda T."/>
            <person name="Iwayanagi T."/>
            <person name="Wagatsuma M."/>
            <person name="Shiratori A."/>
            <person name="Sudo H."/>
            <person name="Hosoiri T."/>
            <person name="Kaku Y."/>
            <person name="Kodaira H."/>
            <person name="Kondo H."/>
            <person name="Sugawara M."/>
            <person name="Takahashi M."/>
            <person name="Kanda K."/>
            <person name="Yokoi T."/>
            <person name="Furuya T."/>
            <person name="Kikkawa E."/>
            <person name="Omura Y."/>
            <person name="Abe K."/>
            <person name="Kamihara K."/>
            <person name="Katsuta N."/>
            <person name="Sato K."/>
            <person name="Tanikawa M."/>
            <person name="Yamazaki M."/>
            <person name="Ninomiya K."/>
            <person name="Ishibashi T."/>
            <person name="Yamashita H."/>
            <person name="Murakawa K."/>
            <person name="Fujimori K."/>
            <person name="Tanai H."/>
            <person name="Kimata M."/>
            <person name="Watanabe M."/>
            <person name="Hiraoka S."/>
            <person name="Chiba Y."/>
            <person name="Ishida S."/>
            <person name="Ono Y."/>
            <person name="Takiguchi S."/>
            <person name="Watanabe S."/>
            <person name="Yosida M."/>
            <person name="Hotuta T."/>
            <person name="Kusano J."/>
            <person name="Kanehori K."/>
            <person name="Takahashi-Fujii A."/>
            <person name="Hara H."/>
            <person name="Tanase T.-O."/>
            <person name="Nomura Y."/>
            <person name="Togiya S."/>
            <person name="Komai F."/>
            <person name="Hara R."/>
            <person name="Takeuchi K."/>
            <person name="Arita M."/>
            <person name="Imose N."/>
            <person name="Musashino K."/>
            <person name="Yuuki H."/>
            <person name="Oshima A."/>
            <person name="Sasaki N."/>
            <person name="Aotsuka S."/>
            <person name="Yoshikawa Y."/>
            <person name="Matsunawa H."/>
            <person name="Ichihara T."/>
            <person name="Shiohata N."/>
            <person name="Sano S."/>
            <person name="Moriya S."/>
            <person name="Momiyama H."/>
            <person name="Satoh N."/>
            <person name="Takami S."/>
            <person name="Terashima Y."/>
            <person name="Suzuki O."/>
            <person name="Nakagawa S."/>
            <person name="Senoh A."/>
            <person name="Mizoguchi H."/>
            <person name="Goto Y."/>
            <person name="Shimizu F."/>
            <person name="Wakebe H."/>
            <person name="Hishigaki H."/>
            <person name="Watanabe T."/>
            <person name="Sugiyama A."/>
            <person name="Takemoto M."/>
            <person name="Kawakami B."/>
            <person name="Yamazaki M."/>
            <person name="Watanabe K."/>
            <person name="Kumagai A."/>
            <person name="Itakura S."/>
            <person name="Fukuzumi Y."/>
            <person name="Fujimori Y."/>
            <person name="Komiyama M."/>
            <person name="Tashiro H."/>
            <person name="Tanigami A."/>
            <person name="Fujiwara T."/>
            <person name="Ono T."/>
            <person name="Yamada K."/>
            <person name="Fujii Y."/>
            <person name="Ozaki K."/>
            <person name="Hirao M."/>
            <person name="Ohmori Y."/>
            <person name="Kawabata A."/>
            <person name="Hikiji T."/>
            <person name="Kobatake N."/>
            <person name="Inagaki H."/>
            <person name="Ikema Y."/>
            <person name="Okamoto S."/>
            <person name="Okitani R."/>
            <person name="Kawakami T."/>
            <person name="Noguchi S."/>
            <person name="Itoh T."/>
            <person name="Shigeta K."/>
            <person name="Senba T."/>
            <person name="Matsumura K."/>
            <person name="Nakajima Y."/>
            <person name="Mizuno T."/>
            <person name="Morinaga M."/>
            <person name="Sasaki M."/>
            <person name="Togashi T."/>
            <person name="Oyama M."/>
            <person name="Hata H."/>
            <person name="Watanabe M."/>
            <person name="Komatsu T."/>
            <person name="Mizushima-Sugano J."/>
            <person name="Satoh T."/>
            <person name="Shirai Y."/>
            <person name="Takahashi Y."/>
            <person name="Nakagawa K."/>
            <person name="Okumura K."/>
            <person name="Nagase T."/>
            <person name="Nomura N."/>
            <person name="Kikuchi H."/>
            <person name="Masuho Y."/>
            <person name="Yamashita R."/>
            <person name="Nakai K."/>
            <person name="Yada T."/>
            <person name="Nakamura Y."/>
            <person name="Ohara O."/>
            <person name="Isogai T."/>
            <person name="Sugano S."/>
        </authorList>
    </citation>
    <scope>NUCLEOTIDE SEQUENCE [LARGE SCALE MRNA] (ISOFORMS 2; 3 AND 5)</scope>
    <source>
        <tissue>Thalamus</tissue>
    </source>
</reference>
<reference key="7">
    <citation type="journal article" date="2006" name="Nature">
        <title>The DNA sequence and biological annotation of human chromosome 1.</title>
        <authorList>
            <person name="Gregory S.G."/>
            <person name="Barlow K.F."/>
            <person name="McLay K.E."/>
            <person name="Kaul R."/>
            <person name="Swarbreck D."/>
            <person name="Dunham A."/>
            <person name="Scott C.E."/>
            <person name="Howe K.L."/>
            <person name="Woodfine K."/>
            <person name="Spencer C.C.A."/>
            <person name="Jones M.C."/>
            <person name="Gillson C."/>
            <person name="Searle S."/>
            <person name="Zhou Y."/>
            <person name="Kokocinski F."/>
            <person name="McDonald L."/>
            <person name="Evans R."/>
            <person name="Phillips K."/>
            <person name="Atkinson A."/>
            <person name="Cooper R."/>
            <person name="Jones C."/>
            <person name="Hall R.E."/>
            <person name="Andrews T.D."/>
            <person name="Lloyd C."/>
            <person name="Ainscough R."/>
            <person name="Almeida J.P."/>
            <person name="Ambrose K.D."/>
            <person name="Anderson F."/>
            <person name="Andrew R.W."/>
            <person name="Ashwell R.I.S."/>
            <person name="Aubin K."/>
            <person name="Babbage A.K."/>
            <person name="Bagguley C.L."/>
            <person name="Bailey J."/>
            <person name="Beasley H."/>
            <person name="Bethel G."/>
            <person name="Bird C.P."/>
            <person name="Bray-Allen S."/>
            <person name="Brown J.Y."/>
            <person name="Brown A.J."/>
            <person name="Buckley D."/>
            <person name="Burton J."/>
            <person name="Bye J."/>
            <person name="Carder C."/>
            <person name="Chapman J.C."/>
            <person name="Clark S.Y."/>
            <person name="Clarke G."/>
            <person name="Clee C."/>
            <person name="Cobley V."/>
            <person name="Collier R.E."/>
            <person name="Corby N."/>
            <person name="Coville G.J."/>
            <person name="Davies J."/>
            <person name="Deadman R."/>
            <person name="Dunn M."/>
            <person name="Earthrowl M."/>
            <person name="Ellington A.G."/>
            <person name="Errington H."/>
            <person name="Frankish A."/>
            <person name="Frankland J."/>
            <person name="French L."/>
            <person name="Garner P."/>
            <person name="Garnett J."/>
            <person name="Gay L."/>
            <person name="Ghori M.R.J."/>
            <person name="Gibson R."/>
            <person name="Gilby L.M."/>
            <person name="Gillett W."/>
            <person name="Glithero R.J."/>
            <person name="Grafham D.V."/>
            <person name="Griffiths C."/>
            <person name="Griffiths-Jones S."/>
            <person name="Grocock R."/>
            <person name="Hammond S."/>
            <person name="Harrison E.S.I."/>
            <person name="Hart E."/>
            <person name="Haugen E."/>
            <person name="Heath P.D."/>
            <person name="Holmes S."/>
            <person name="Holt K."/>
            <person name="Howden P.J."/>
            <person name="Hunt A.R."/>
            <person name="Hunt S.E."/>
            <person name="Hunter G."/>
            <person name="Isherwood J."/>
            <person name="James R."/>
            <person name="Johnson C."/>
            <person name="Johnson D."/>
            <person name="Joy A."/>
            <person name="Kay M."/>
            <person name="Kershaw J.K."/>
            <person name="Kibukawa M."/>
            <person name="Kimberley A.M."/>
            <person name="King A."/>
            <person name="Knights A.J."/>
            <person name="Lad H."/>
            <person name="Laird G."/>
            <person name="Lawlor S."/>
            <person name="Leongamornlert D.A."/>
            <person name="Lloyd D.M."/>
            <person name="Loveland J."/>
            <person name="Lovell J."/>
            <person name="Lush M.J."/>
            <person name="Lyne R."/>
            <person name="Martin S."/>
            <person name="Mashreghi-Mohammadi M."/>
            <person name="Matthews L."/>
            <person name="Matthews N.S.W."/>
            <person name="McLaren S."/>
            <person name="Milne S."/>
            <person name="Mistry S."/>
            <person name="Moore M.J.F."/>
            <person name="Nickerson T."/>
            <person name="O'Dell C.N."/>
            <person name="Oliver K."/>
            <person name="Palmeiri A."/>
            <person name="Palmer S.A."/>
            <person name="Parker A."/>
            <person name="Patel D."/>
            <person name="Pearce A.V."/>
            <person name="Peck A.I."/>
            <person name="Pelan S."/>
            <person name="Phelps K."/>
            <person name="Phillimore B.J."/>
            <person name="Plumb R."/>
            <person name="Rajan J."/>
            <person name="Raymond C."/>
            <person name="Rouse G."/>
            <person name="Saenphimmachak C."/>
            <person name="Sehra H.K."/>
            <person name="Sheridan E."/>
            <person name="Shownkeen R."/>
            <person name="Sims S."/>
            <person name="Skuce C.D."/>
            <person name="Smith M."/>
            <person name="Steward C."/>
            <person name="Subramanian S."/>
            <person name="Sycamore N."/>
            <person name="Tracey A."/>
            <person name="Tromans A."/>
            <person name="Van Helmond Z."/>
            <person name="Wall M."/>
            <person name="Wallis J.M."/>
            <person name="White S."/>
            <person name="Whitehead S.L."/>
            <person name="Wilkinson J.E."/>
            <person name="Willey D.L."/>
            <person name="Williams H."/>
            <person name="Wilming L."/>
            <person name="Wray P.W."/>
            <person name="Wu Z."/>
            <person name="Coulson A."/>
            <person name="Vaudin M."/>
            <person name="Sulston J.E."/>
            <person name="Durbin R.M."/>
            <person name="Hubbard T."/>
            <person name="Wooster R."/>
            <person name="Dunham I."/>
            <person name="Carter N.P."/>
            <person name="McVean G."/>
            <person name="Ross M.T."/>
            <person name="Harrow J."/>
            <person name="Olson M.V."/>
            <person name="Beck S."/>
            <person name="Rogers J."/>
            <person name="Bentley D.R."/>
        </authorList>
    </citation>
    <scope>NUCLEOTIDE SEQUENCE [LARGE SCALE GENOMIC DNA]</scope>
</reference>
<reference key="8">
    <citation type="journal article" date="2004" name="Genome Res.">
        <title>The status, quality, and expansion of the NIH full-length cDNA project: the Mammalian Gene Collection (MGC).</title>
        <authorList>
            <consortium name="The MGC Project Team"/>
        </authorList>
    </citation>
    <scope>NUCLEOTIDE SEQUENCE [LARGE SCALE MRNA] (ISOFORMS 1 AND 3)</scope>
    <source>
        <tissue>Muscle</tissue>
        <tissue>Placenta</tissue>
        <tissue>Uterus</tissue>
    </source>
</reference>
<reference key="9">
    <citation type="journal article" date="2004" name="Nature">
        <title>Dephosphorylated SRp38 acts as a splicing repressor in response to heat shock.</title>
        <authorList>
            <person name="Shin C."/>
            <person name="Feng Y."/>
            <person name="Manley J.L."/>
        </authorList>
    </citation>
    <scope>FUNCTION</scope>
    <scope>PHOSPHORYLATION</scope>
    <scope>INTERACTION WITH SNRNP70 AND TRA2B</scope>
</reference>
<reference key="10">
    <citation type="journal article" date="2006" name="Cell">
        <title>Global, in vivo, and site-specific phosphorylation dynamics in signaling networks.</title>
        <authorList>
            <person name="Olsen J.V."/>
            <person name="Blagoev B."/>
            <person name="Gnad F."/>
            <person name="Macek B."/>
            <person name="Kumar C."/>
            <person name="Mortensen P."/>
            <person name="Mann M."/>
        </authorList>
    </citation>
    <scope>IDENTIFICATION BY MASS SPECTROMETRY [LARGE SCALE ANALYSIS]</scope>
    <source>
        <tissue>Cervix carcinoma</tissue>
    </source>
</reference>
<reference key="11">
    <citation type="journal article" date="2008" name="Proc. Natl. Acad. Sci. U.S.A.">
        <title>A quantitative atlas of mitotic phosphorylation.</title>
        <authorList>
            <person name="Dephoure N."/>
            <person name="Zhou C."/>
            <person name="Villen J."/>
            <person name="Beausoleil S.A."/>
            <person name="Bakalarski C.E."/>
            <person name="Elledge S.J."/>
            <person name="Gygi S.P."/>
        </authorList>
    </citation>
    <scope>PHOSPHORYLATION [LARGE SCALE ANALYSIS] AT SER-129; SER-131 AND SER-133</scope>
    <scope>IDENTIFICATION BY MASS SPECTROMETRY [LARGE SCALE ANALYSIS]</scope>
    <source>
        <tissue>Cervix carcinoma</tissue>
    </source>
</reference>
<reference key="12">
    <citation type="journal article" date="2009" name="Mol. Cell. Proteomics">
        <title>Large-scale proteomics analysis of the human kinome.</title>
        <authorList>
            <person name="Oppermann F.S."/>
            <person name="Gnad F."/>
            <person name="Olsen J.V."/>
            <person name="Hornberger R."/>
            <person name="Greff Z."/>
            <person name="Keri G."/>
            <person name="Mann M."/>
            <person name="Daub H."/>
        </authorList>
    </citation>
    <scope>PHOSPHORYLATION [LARGE SCALE ANALYSIS] AT SER-133</scope>
    <scope>IDENTIFICATION BY MASS SPECTROMETRY [LARGE SCALE ANALYSIS]</scope>
</reference>
<reference key="13">
    <citation type="journal article" date="2010" name="Sci. Signal.">
        <title>Quantitative phosphoproteomics reveals widespread full phosphorylation site occupancy during mitosis.</title>
        <authorList>
            <person name="Olsen J.V."/>
            <person name="Vermeulen M."/>
            <person name="Santamaria A."/>
            <person name="Kumar C."/>
            <person name="Miller M.L."/>
            <person name="Jensen L.J."/>
            <person name="Gnad F."/>
            <person name="Cox J."/>
            <person name="Jensen T.S."/>
            <person name="Nigg E.A."/>
            <person name="Brunak S."/>
            <person name="Mann M."/>
        </authorList>
    </citation>
    <scope>PHOSPHORYLATION [LARGE SCALE ANALYSIS] AT SER-131; SER-133; SER-158 AND SER-160</scope>
    <scope>IDENTIFICATION BY MASS SPECTROMETRY [LARGE SCALE ANALYSIS]</scope>
    <source>
        <tissue>Cervix carcinoma</tissue>
    </source>
</reference>
<reference key="14">
    <citation type="journal article" date="2011" name="BMC Syst. Biol.">
        <title>Initial characterization of the human central proteome.</title>
        <authorList>
            <person name="Burkard T.R."/>
            <person name="Planyavsky M."/>
            <person name="Kaupe I."/>
            <person name="Breitwieser F.P."/>
            <person name="Buerckstuemmer T."/>
            <person name="Bennett K.L."/>
            <person name="Superti-Furga G."/>
            <person name="Colinge J."/>
        </authorList>
    </citation>
    <scope>IDENTIFICATION BY MASS SPECTROMETRY [LARGE SCALE ANALYSIS]</scope>
</reference>
<reference key="15">
    <citation type="journal article" date="2011" name="Sci. Signal.">
        <title>System-wide temporal characterization of the proteome and phosphoproteome of human embryonic stem cell differentiation.</title>
        <authorList>
            <person name="Rigbolt K.T."/>
            <person name="Prokhorova T.A."/>
            <person name="Akimov V."/>
            <person name="Henningsen J."/>
            <person name="Johansen P.T."/>
            <person name="Kratchmarova I."/>
            <person name="Kassem M."/>
            <person name="Mann M."/>
            <person name="Olsen J.V."/>
            <person name="Blagoev B."/>
        </authorList>
    </citation>
    <scope>PHOSPHORYLATION [LARGE SCALE ANALYSIS] AT SER-106; SER-108; SER-131 AND SER-133</scope>
    <scope>PHOSPHORYLATION [LARGE SCALE ANALYSIS] AT SER-158 AND SER-160 (ISOFORM 4)</scope>
    <scope>IDENTIFICATION BY MASS SPECTROMETRY [LARGE SCALE ANALYSIS]</scope>
</reference>
<reference key="16">
    <citation type="journal article" date="2013" name="J. Proteome Res.">
        <title>Toward a comprehensive characterization of a human cancer cell phosphoproteome.</title>
        <authorList>
            <person name="Zhou H."/>
            <person name="Di Palma S."/>
            <person name="Preisinger C."/>
            <person name="Peng M."/>
            <person name="Polat A.N."/>
            <person name="Heck A.J."/>
            <person name="Mohammed S."/>
        </authorList>
    </citation>
    <scope>PHOSPHORYLATION [LARGE SCALE ANALYSIS] AT SER-23; SER-106; SER-108; SER-129; SER-131 AND SER-133</scope>
    <scope>IDENTIFICATION BY MASS SPECTROMETRY [LARGE SCALE ANALYSIS]</scope>
    <source>
        <tissue>Cervix carcinoma</tissue>
        <tissue>Erythroleukemia</tissue>
    </source>
</reference>
<reference key="17">
    <citation type="journal article" date="2014" name="J. Proteomics">
        <title>An enzyme assisted RP-RPLC approach for in-depth analysis of human liver phosphoproteome.</title>
        <authorList>
            <person name="Bian Y."/>
            <person name="Song C."/>
            <person name="Cheng K."/>
            <person name="Dong M."/>
            <person name="Wang F."/>
            <person name="Huang J."/>
            <person name="Sun D."/>
            <person name="Wang L."/>
            <person name="Ye M."/>
            <person name="Zou H."/>
        </authorList>
    </citation>
    <scope>PHOSPHORYLATION [LARGE SCALE ANALYSIS] AT SER-131 AND SER-133</scope>
    <scope>IDENTIFICATION BY MASS SPECTROMETRY [LARGE SCALE ANALYSIS]</scope>
    <source>
        <tissue>Liver</tissue>
    </source>
</reference>
<reference key="18">
    <citation type="journal article" date="2016" name="Mol. Cell">
        <title>Nuclear m(6)A reader YTHDC1 regulates mRNA splicing.</title>
        <authorList>
            <person name="Xiao W."/>
            <person name="Adhikari S."/>
            <person name="Dahal U."/>
            <person name="Chen Y.S."/>
            <person name="Hao Y.J."/>
            <person name="Sun B.F."/>
            <person name="Sun H.Y."/>
            <person name="Li A."/>
            <person name="Ping X.L."/>
            <person name="Lai W.Y."/>
            <person name="Wang X."/>
            <person name="Ma H.L."/>
            <person name="Huang C.M."/>
            <person name="Yang Y."/>
            <person name="Huang N."/>
            <person name="Jiang G.B."/>
            <person name="Wang H.L."/>
            <person name="Zhou Q."/>
            <person name="Wang X.J."/>
            <person name="Zhao Y.L."/>
            <person name="Yang Y.G."/>
        </authorList>
    </citation>
    <scope>FUNCTION</scope>
    <scope>SUBCELLULAR LOCATION</scope>
    <scope>INTERACTION WITH YTHDC1</scope>
</reference>
<accession>O75494</accession>
<accession>A6NFM6</accession>
<accession>A6NI42</accession>
<accession>A6NIU7</accession>
<accession>B4DJP9</accession>
<accession>O60572</accession>
<accession>Q5JRH9</accession>
<accession>Q5JRI0</accession>
<accession>Q5JRI2</accession>
<accession>Q5JRI3</accession>
<accession>Q5JRI4</accession>
<accession>Q96G09</accession>
<accession>Q96P17</accession>
<feature type="chain" id="PRO_0000081593" description="Serine/arginine-rich splicing factor 10">
    <location>
        <begin position="1"/>
        <end position="262"/>
    </location>
</feature>
<feature type="domain" description="RRM" evidence="2">
    <location>
        <begin position="10"/>
        <end position="88"/>
    </location>
</feature>
<feature type="region of interest" description="Disordered" evidence="3">
    <location>
        <begin position="116"/>
        <end position="262"/>
    </location>
</feature>
<feature type="compositionally biased region" description="Basic and acidic residues" evidence="3">
    <location>
        <begin position="116"/>
        <end position="126"/>
    </location>
</feature>
<feature type="compositionally biased region" description="Low complexity" evidence="3">
    <location>
        <begin position="134"/>
        <end position="150"/>
    </location>
</feature>
<feature type="compositionally biased region" description="Basic residues" evidence="3">
    <location>
        <begin position="165"/>
        <end position="186"/>
    </location>
</feature>
<feature type="compositionally biased region" description="Basic residues" evidence="3">
    <location>
        <begin position="194"/>
        <end position="207"/>
    </location>
</feature>
<feature type="compositionally biased region" description="Basic and acidic residues" evidence="3">
    <location>
        <begin position="209"/>
        <end position="234"/>
    </location>
</feature>
<feature type="compositionally biased region" description="Low complexity" evidence="3">
    <location>
        <begin position="252"/>
        <end position="262"/>
    </location>
</feature>
<feature type="modified residue" description="Phosphoserine" evidence="19">
    <location>
        <position position="23"/>
    </location>
</feature>
<feature type="modified residue" description="Phosphoserine" evidence="18 19">
    <location>
        <position position="106"/>
    </location>
</feature>
<feature type="modified residue" description="Phosphoserine" evidence="18 19">
    <location>
        <position position="108"/>
    </location>
</feature>
<feature type="modified residue" description="Phosphoserine" evidence="15 19">
    <location>
        <position position="129"/>
    </location>
</feature>
<feature type="modified residue" description="Phosphoserine" evidence="15 17 18 19 20">
    <location>
        <position position="131"/>
    </location>
</feature>
<feature type="modified residue" description="Phosphoserine" evidence="15 16 17 18 19 20">
    <location>
        <position position="133"/>
    </location>
</feature>
<feature type="modified residue" description="Phosphoserine" evidence="17">
    <location>
        <position position="158"/>
    </location>
</feature>
<feature type="modified residue" description="Phosphoserine" evidence="17">
    <location>
        <position position="160"/>
    </location>
</feature>
<feature type="splice variant" id="VSP_043697" description="In isoform 5." evidence="11">
    <original>NSRPTGRPRRSRSHSDNDRF</original>
    <variation>KPNCSWNTQYSSAYYTSRKI</variation>
    <location>
        <begin position="146"/>
        <end position="165"/>
    </location>
</feature>
<feature type="splice variant" id="VSP_010421" description="In isoform 2 and isoform 6." evidence="11">
    <location>
        <position position="147"/>
    </location>
</feature>
<feature type="splice variant" id="VSP_010422" description="In isoform 4." evidence="14">
    <original>RFKHRNRSFS</original>
    <variation>SQVSKKKNER</variation>
    <location>
        <begin position="164"/>
        <end position="173"/>
    </location>
</feature>
<feature type="splice variant" id="VSP_010424" description="In isoform 3 and isoform 6." evidence="10 11 12 13">
    <original>FKHRNRSFSRSKSNSRSRS</original>
    <variation>PNCSWNTQYSSAYYTSRKI</variation>
    <location>
        <begin position="165"/>
        <end position="183"/>
    </location>
</feature>
<feature type="splice variant" id="VSP_043698" description="In isoform 5." evidence="11">
    <location>
        <begin position="166"/>
        <end position="173"/>
    </location>
</feature>
<feature type="splice variant" id="VSP_010423" description="In isoform 4 and isoform 5." evidence="11">
    <location>
        <begin position="174"/>
        <end position="183"/>
    </location>
</feature>
<feature type="splice variant" id="VSP_010425" description="In isoform 3, isoform 4, isoform 5 and isoform 6." evidence="10 11 12 13">
    <location>
        <begin position="184"/>
        <end position="262"/>
    </location>
</feature>
<feature type="modified residue" description="Phosphoserine" evidence="1">
    <location sequence="O75494-3">
        <position position="168"/>
    </location>
</feature>
<feature type="modified residue" description="Phosphoserine" evidence="18">
    <location sequence="O75494-4">
        <position position="158"/>
    </location>
</feature>
<feature type="modified residue" description="Phosphoserine" evidence="18">
    <location sequence="O75494-4">
        <position position="160"/>
    </location>
</feature>
<organism>
    <name type="scientific">Homo sapiens</name>
    <name type="common">Human</name>
    <dbReference type="NCBI Taxonomy" id="9606"/>
    <lineage>
        <taxon>Eukaryota</taxon>
        <taxon>Metazoa</taxon>
        <taxon>Chordata</taxon>
        <taxon>Craniata</taxon>
        <taxon>Vertebrata</taxon>
        <taxon>Euteleostomi</taxon>
        <taxon>Mammalia</taxon>
        <taxon>Eutheria</taxon>
        <taxon>Euarchontoglires</taxon>
        <taxon>Primates</taxon>
        <taxon>Haplorrhini</taxon>
        <taxon>Catarrhini</taxon>
        <taxon>Hominidae</taxon>
        <taxon>Homo</taxon>
    </lineage>
</organism>
<evidence type="ECO:0000250" key="1"/>
<evidence type="ECO:0000255" key="2">
    <source>
        <dbReference type="PROSITE-ProRule" id="PRU00176"/>
    </source>
</evidence>
<evidence type="ECO:0000256" key="3">
    <source>
        <dbReference type="SAM" id="MobiDB-lite"/>
    </source>
</evidence>
<evidence type="ECO:0000269" key="4">
    <source>
    </source>
</evidence>
<evidence type="ECO:0000269" key="5">
    <source>
    </source>
</evidence>
<evidence type="ECO:0000269" key="6">
    <source>
    </source>
</evidence>
<evidence type="ECO:0000269" key="7">
    <source>
    </source>
</evidence>
<evidence type="ECO:0000269" key="8">
    <source>
    </source>
</evidence>
<evidence type="ECO:0000269" key="9">
    <source>
    </source>
</evidence>
<evidence type="ECO:0000303" key="10">
    <source>
    </source>
</evidence>
<evidence type="ECO:0000303" key="11">
    <source>
    </source>
</evidence>
<evidence type="ECO:0000303" key="12">
    <source>
    </source>
</evidence>
<evidence type="ECO:0000303" key="13">
    <source>
    </source>
</evidence>
<evidence type="ECO:0000305" key="14"/>
<evidence type="ECO:0007744" key="15">
    <source>
    </source>
</evidence>
<evidence type="ECO:0007744" key="16">
    <source>
    </source>
</evidence>
<evidence type="ECO:0007744" key="17">
    <source>
    </source>
</evidence>
<evidence type="ECO:0007744" key="18">
    <source>
    </source>
</evidence>
<evidence type="ECO:0007744" key="19">
    <source>
    </source>
</evidence>
<evidence type="ECO:0007744" key="20">
    <source>
    </source>
</evidence>
<proteinExistence type="evidence at protein level"/>
<name>SRS10_HUMAN</name>